<proteinExistence type="inferred from homology"/>
<name>LPXD_HELPY</name>
<keyword id="KW-0012">Acyltransferase</keyword>
<keyword id="KW-0441">Lipid A biosynthesis</keyword>
<keyword id="KW-0444">Lipid biosynthesis</keyword>
<keyword id="KW-0443">Lipid metabolism</keyword>
<keyword id="KW-1185">Reference proteome</keyword>
<keyword id="KW-0677">Repeat</keyword>
<keyword id="KW-0808">Transferase</keyword>
<organism>
    <name type="scientific">Helicobacter pylori (strain ATCC 700392 / 26695)</name>
    <name type="common">Campylobacter pylori</name>
    <dbReference type="NCBI Taxonomy" id="85962"/>
    <lineage>
        <taxon>Bacteria</taxon>
        <taxon>Pseudomonadati</taxon>
        <taxon>Campylobacterota</taxon>
        <taxon>Epsilonproteobacteria</taxon>
        <taxon>Campylobacterales</taxon>
        <taxon>Helicobacteraceae</taxon>
        <taxon>Helicobacter</taxon>
    </lineage>
</organism>
<feature type="chain" id="PRO_0000059679" description="UDP-3-O-acylglucosamine N-acyltransferase">
    <location>
        <begin position="1"/>
        <end position="336"/>
    </location>
</feature>
<feature type="active site" description="Proton acceptor" evidence="1">
    <location>
        <position position="233"/>
    </location>
</feature>
<reference key="1">
    <citation type="journal article" date="1997" name="Nature">
        <title>The complete genome sequence of the gastric pathogen Helicobacter pylori.</title>
        <authorList>
            <person name="Tomb J.-F."/>
            <person name="White O."/>
            <person name="Kerlavage A.R."/>
            <person name="Clayton R.A."/>
            <person name="Sutton G.G."/>
            <person name="Fleischmann R.D."/>
            <person name="Ketchum K.A."/>
            <person name="Klenk H.-P."/>
            <person name="Gill S.R."/>
            <person name="Dougherty B.A."/>
            <person name="Nelson K.E."/>
            <person name="Quackenbush J."/>
            <person name="Zhou L."/>
            <person name="Kirkness E.F."/>
            <person name="Peterson S.N."/>
            <person name="Loftus B.J."/>
            <person name="Richardson D.L."/>
            <person name="Dodson R.J."/>
            <person name="Khalak H.G."/>
            <person name="Glodek A."/>
            <person name="McKenney K."/>
            <person name="FitzGerald L.M."/>
            <person name="Lee N."/>
            <person name="Adams M.D."/>
            <person name="Hickey E.K."/>
            <person name="Berg D.E."/>
            <person name="Gocayne J.D."/>
            <person name="Utterback T.R."/>
            <person name="Peterson J.D."/>
            <person name="Kelley J.M."/>
            <person name="Cotton M.D."/>
            <person name="Weidman J.F."/>
            <person name="Fujii C."/>
            <person name="Bowman C."/>
            <person name="Watthey L."/>
            <person name="Wallin E."/>
            <person name="Hayes W.S."/>
            <person name="Borodovsky M."/>
            <person name="Karp P.D."/>
            <person name="Smith H.O."/>
            <person name="Fraser C.M."/>
            <person name="Venter J.C."/>
        </authorList>
    </citation>
    <scope>NUCLEOTIDE SEQUENCE [LARGE SCALE GENOMIC DNA]</scope>
    <source>
        <strain>ATCC 700392 / 26695</strain>
    </source>
</reference>
<dbReference type="EC" id="2.3.1.191" evidence="1"/>
<dbReference type="EMBL" id="AE000511">
    <property type="protein sequence ID" value="AAD07263.1"/>
    <property type="molecule type" value="Genomic_DNA"/>
</dbReference>
<dbReference type="PIR" id="D64544">
    <property type="entry name" value="D64544"/>
</dbReference>
<dbReference type="RefSeq" id="NP_206995.1">
    <property type="nucleotide sequence ID" value="NC_000915.1"/>
</dbReference>
<dbReference type="RefSeq" id="WP_000777041.1">
    <property type="nucleotide sequence ID" value="NC_018939.1"/>
</dbReference>
<dbReference type="SMR" id="O24991"/>
<dbReference type="DIP" id="DIP-3246N"/>
<dbReference type="FunCoup" id="O24991">
    <property type="interactions" value="270"/>
</dbReference>
<dbReference type="IntAct" id="O24991">
    <property type="interactions" value="5"/>
</dbReference>
<dbReference type="MINT" id="O24991"/>
<dbReference type="STRING" id="85962.HP_0196"/>
<dbReference type="PaxDb" id="85962-C694_00975"/>
<dbReference type="EnsemblBacteria" id="AAD07263">
    <property type="protein sequence ID" value="AAD07263"/>
    <property type="gene ID" value="HP_0196"/>
</dbReference>
<dbReference type="KEGG" id="heo:C694_00975"/>
<dbReference type="KEGG" id="hpy:HP_0196"/>
<dbReference type="PATRIC" id="fig|85962.47.peg.211"/>
<dbReference type="eggNOG" id="COG1044">
    <property type="taxonomic scope" value="Bacteria"/>
</dbReference>
<dbReference type="InParanoid" id="O24991"/>
<dbReference type="OrthoDB" id="9784739at2"/>
<dbReference type="PhylomeDB" id="O24991"/>
<dbReference type="BioCyc" id="MetaCyc:HP_RS00955-MONOMER"/>
<dbReference type="UniPathway" id="UPA00973"/>
<dbReference type="Proteomes" id="UP000000429">
    <property type="component" value="Chromosome"/>
</dbReference>
<dbReference type="GO" id="GO:0016020">
    <property type="term" value="C:membrane"/>
    <property type="evidence" value="ECO:0007669"/>
    <property type="project" value="GOC"/>
</dbReference>
<dbReference type="GO" id="GO:0016410">
    <property type="term" value="F:N-acyltransferase activity"/>
    <property type="evidence" value="ECO:0007669"/>
    <property type="project" value="InterPro"/>
</dbReference>
<dbReference type="GO" id="GO:0009245">
    <property type="term" value="P:lipid A biosynthetic process"/>
    <property type="evidence" value="ECO:0007669"/>
    <property type="project" value="UniProtKB-UniRule"/>
</dbReference>
<dbReference type="CDD" id="cd03352">
    <property type="entry name" value="LbH_LpxD"/>
    <property type="match status" value="1"/>
</dbReference>
<dbReference type="Gene3D" id="2.160.10.10">
    <property type="entry name" value="Hexapeptide repeat proteins"/>
    <property type="match status" value="1"/>
</dbReference>
<dbReference type="Gene3D" id="3.40.1390.10">
    <property type="entry name" value="MurE/MurF, N-terminal domain"/>
    <property type="match status" value="1"/>
</dbReference>
<dbReference type="HAMAP" id="MF_00523">
    <property type="entry name" value="LpxD"/>
    <property type="match status" value="1"/>
</dbReference>
<dbReference type="InterPro" id="IPR001451">
    <property type="entry name" value="Hexapep"/>
</dbReference>
<dbReference type="InterPro" id="IPR007691">
    <property type="entry name" value="LpxD"/>
</dbReference>
<dbReference type="InterPro" id="IPR011004">
    <property type="entry name" value="Trimer_LpxA-like_sf"/>
</dbReference>
<dbReference type="InterPro" id="IPR020573">
    <property type="entry name" value="UDP_GlcNAc_AcTrfase_non-rep"/>
</dbReference>
<dbReference type="NCBIfam" id="TIGR01853">
    <property type="entry name" value="lipid_A_lpxD"/>
    <property type="match status" value="1"/>
</dbReference>
<dbReference type="NCBIfam" id="NF002060">
    <property type="entry name" value="PRK00892.1"/>
    <property type="match status" value="1"/>
</dbReference>
<dbReference type="PANTHER" id="PTHR43378">
    <property type="entry name" value="UDP-3-O-ACYLGLUCOSAMINE N-ACYLTRANSFERASE"/>
    <property type="match status" value="1"/>
</dbReference>
<dbReference type="PANTHER" id="PTHR43378:SF2">
    <property type="entry name" value="UDP-3-O-ACYLGLUCOSAMINE N-ACYLTRANSFERASE 1, MITOCHONDRIAL-RELATED"/>
    <property type="match status" value="1"/>
</dbReference>
<dbReference type="Pfam" id="PF00132">
    <property type="entry name" value="Hexapep"/>
    <property type="match status" value="3"/>
</dbReference>
<dbReference type="Pfam" id="PF04613">
    <property type="entry name" value="LpxD"/>
    <property type="match status" value="1"/>
</dbReference>
<dbReference type="SUPFAM" id="SSF51161">
    <property type="entry name" value="Trimeric LpxA-like enzymes"/>
    <property type="match status" value="1"/>
</dbReference>
<accession>O24991</accession>
<evidence type="ECO:0000255" key="1">
    <source>
        <dbReference type="HAMAP-Rule" id="MF_00523"/>
    </source>
</evidence>
<comment type="function">
    <text evidence="1">Catalyzes the N-acylation of UDP-3-O-acylglucosamine using 3-hydroxyacyl-ACP as the acyl donor. Is involved in the biosynthesis of lipid A, a phosphorylated glycolipid that anchors the lipopolysaccharide to the outer membrane of the cell.</text>
</comment>
<comment type="catalytic activity">
    <reaction evidence="1">
        <text>a UDP-3-O-[(3R)-3-hydroxyacyl]-alpha-D-glucosamine + a (3R)-hydroxyacyl-[ACP] = a UDP-2-N,3-O-bis[(3R)-3-hydroxyacyl]-alpha-D-glucosamine + holo-[ACP] + H(+)</text>
        <dbReference type="Rhea" id="RHEA:53836"/>
        <dbReference type="Rhea" id="RHEA-COMP:9685"/>
        <dbReference type="Rhea" id="RHEA-COMP:9945"/>
        <dbReference type="ChEBI" id="CHEBI:15378"/>
        <dbReference type="ChEBI" id="CHEBI:64479"/>
        <dbReference type="ChEBI" id="CHEBI:78827"/>
        <dbReference type="ChEBI" id="CHEBI:137740"/>
        <dbReference type="ChEBI" id="CHEBI:137748"/>
        <dbReference type="EC" id="2.3.1.191"/>
    </reaction>
</comment>
<comment type="pathway">
    <text evidence="1">Bacterial outer membrane biogenesis; LPS lipid A biosynthesis.</text>
</comment>
<comment type="subunit">
    <text evidence="1">Homotrimer.</text>
</comment>
<comment type="similarity">
    <text evidence="1">Belongs to the transferase hexapeptide repeat family. LpxD subfamily.</text>
</comment>
<sequence>MKLSELLNAYSIETEFSNDFEVHALAELNKATPNDISYIDQARYLKLLKDSKAGAVFIRKKESSKVPKRMQALVVDNPHLAFAKASHAFKIPFFKNPESVNEPKHFERVTIMPNVVIGEGVEIGENSLIYPGVVIADGVKIGKNCILYPRVTLYQNTILEDNVTIHAGSVIGGDGFGYAHTALGEHVKIEHVGIVRIQKNVEIGANTAIDRAVFGETLIKEGVKIDNLVQIGHNCVLGEHSIVVSQVGLSGSTTTGRNVVFGGQVGIGGHLHVGEFTQIGGKSAVGKDLPPNTNFAGAIPAMEIHEWHHFLAHLRTNFRKQQKTSLLQKAKGFFKS</sequence>
<protein>
    <recommendedName>
        <fullName evidence="1">UDP-3-O-acylglucosamine N-acyltransferase</fullName>
        <ecNumber evidence="1">2.3.1.191</ecNumber>
    </recommendedName>
</protein>
<gene>
    <name evidence="1" type="primary">lpxD</name>
    <name type="ordered locus">HP_0196</name>
</gene>